<name>PIM1_FELCA</name>
<feature type="chain" id="PRO_0000086529" description="Serine/threonine-protein kinase pim-1">
    <location>
        <begin position="1"/>
        <end position="313"/>
    </location>
</feature>
<feature type="domain" description="Protein kinase" evidence="4">
    <location>
        <begin position="38"/>
        <end position="290"/>
    </location>
</feature>
<feature type="active site" description="Proton acceptor" evidence="4 5">
    <location>
        <position position="167"/>
    </location>
</feature>
<feature type="binding site" evidence="4">
    <location>
        <begin position="44"/>
        <end position="52"/>
    </location>
    <ligand>
        <name>ATP</name>
        <dbReference type="ChEBI" id="CHEBI:30616"/>
    </ligand>
</feature>
<feature type="binding site" evidence="4">
    <location>
        <position position="67"/>
    </location>
    <ligand>
        <name>ATP</name>
        <dbReference type="ChEBI" id="CHEBI:30616"/>
    </ligand>
</feature>
<feature type="binding site" evidence="4">
    <location>
        <position position="121"/>
    </location>
    <ligand>
        <name>ATP</name>
        <dbReference type="ChEBI" id="CHEBI:30616"/>
    </ligand>
</feature>
<feature type="binding site" evidence="4">
    <location>
        <position position="128"/>
    </location>
    <ligand>
        <name>ATP</name>
        <dbReference type="ChEBI" id="CHEBI:30616"/>
    </ligand>
</feature>
<feature type="modified residue" description="Phosphoserine" evidence="3">
    <location>
        <position position="8"/>
    </location>
</feature>
<feature type="modified residue" description="Phosphothreonine" evidence="3">
    <location>
        <position position="23"/>
    </location>
</feature>
<feature type="modified residue" description="Phosphoserine" evidence="3">
    <location>
        <position position="98"/>
    </location>
</feature>
<feature type="modified residue" description="Phosphoserine" evidence="3">
    <location>
        <position position="261"/>
    </location>
</feature>
<accession>Q95LJ0</accession>
<reference key="1">
    <citation type="submission" date="2001-10" db="EMBL/GenBank/DDBJ databases">
        <title>The cDNA sequence of the feline pim-1 oncogene.</title>
        <authorList>
            <person name="Fujino Y."/>
            <person name="Satoh H."/>
            <person name="Hisasue M."/>
            <person name="Masuda K."/>
            <person name="Ohno K."/>
            <person name="Tsujimoto H."/>
        </authorList>
    </citation>
    <scope>NUCLEOTIDE SEQUENCE [MRNA]</scope>
</reference>
<dbReference type="EC" id="2.7.11.1"/>
<dbReference type="EMBL" id="AB073748">
    <property type="protein sequence ID" value="BAB71752.1"/>
    <property type="molecule type" value="mRNA"/>
</dbReference>
<dbReference type="RefSeq" id="NP_001009322.1">
    <property type="nucleotide sequence ID" value="NM_001009322.1"/>
</dbReference>
<dbReference type="SMR" id="Q95LJ0"/>
<dbReference type="STRING" id="9685.ENSFCAP00000021389"/>
<dbReference type="PaxDb" id="9685-ENSFCAP00000025084"/>
<dbReference type="Ensembl" id="ENSFCAT00000029315.4">
    <property type="protein sequence ID" value="ENSFCAP00000021389.3"/>
    <property type="gene ID" value="ENSFCAG00000023702.4"/>
</dbReference>
<dbReference type="GeneID" id="493888"/>
<dbReference type="KEGG" id="fca:493888"/>
<dbReference type="CTD" id="5292"/>
<dbReference type="VGNC" id="VGNC:102483">
    <property type="gene designation" value="PIM1"/>
</dbReference>
<dbReference type="eggNOG" id="KOG0583">
    <property type="taxonomic scope" value="Eukaryota"/>
</dbReference>
<dbReference type="GeneTree" id="ENSGT00940000153394"/>
<dbReference type="HOGENOM" id="CLU_000288_63_0_1"/>
<dbReference type="InParanoid" id="Q95LJ0"/>
<dbReference type="OMA" id="IIRGQVY"/>
<dbReference type="OrthoDB" id="10252171at2759"/>
<dbReference type="Proteomes" id="UP000011712">
    <property type="component" value="Chromosome B2"/>
</dbReference>
<dbReference type="Bgee" id="ENSFCAG00000023702">
    <property type="expression patterns" value="Expressed in testis and 11 other cell types or tissues"/>
</dbReference>
<dbReference type="GO" id="GO:0005737">
    <property type="term" value="C:cytoplasm"/>
    <property type="evidence" value="ECO:0000318"/>
    <property type="project" value="GO_Central"/>
</dbReference>
<dbReference type="GO" id="GO:0005634">
    <property type="term" value="C:nucleus"/>
    <property type="evidence" value="ECO:0007669"/>
    <property type="project" value="UniProtKB-SubCell"/>
</dbReference>
<dbReference type="GO" id="GO:0005524">
    <property type="term" value="F:ATP binding"/>
    <property type="evidence" value="ECO:0007669"/>
    <property type="project" value="UniProtKB-KW"/>
</dbReference>
<dbReference type="GO" id="GO:0106310">
    <property type="term" value="F:protein serine kinase activity"/>
    <property type="evidence" value="ECO:0007669"/>
    <property type="project" value="RHEA"/>
</dbReference>
<dbReference type="GO" id="GO:0004674">
    <property type="term" value="F:protein serine/threonine kinase activity"/>
    <property type="evidence" value="ECO:0000250"/>
    <property type="project" value="UniProtKB"/>
</dbReference>
<dbReference type="GO" id="GO:0006915">
    <property type="term" value="P:apoptotic process"/>
    <property type="evidence" value="ECO:0007669"/>
    <property type="project" value="UniProtKB-KW"/>
</dbReference>
<dbReference type="GO" id="GO:1990748">
    <property type="term" value="P:cellular detoxification"/>
    <property type="evidence" value="ECO:0000250"/>
    <property type="project" value="UniProtKB"/>
</dbReference>
<dbReference type="GO" id="GO:0071346">
    <property type="term" value="P:cellular response to type II interferon"/>
    <property type="evidence" value="ECO:0000250"/>
    <property type="project" value="UniProtKB"/>
</dbReference>
<dbReference type="GO" id="GO:0043066">
    <property type="term" value="P:negative regulation of apoptotic process"/>
    <property type="evidence" value="ECO:0000318"/>
    <property type="project" value="GO_Central"/>
</dbReference>
<dbReference type="GO" id="GO:0045824">
    <property type="term" value="P:negative regulation of innate immune response"/>
    <property type="evidence" value="ECO:0000250"/>
    <property type="project" value="UniProtKB"/>
</dbReference>
<dbReference type="GO" id="GO:0090336">
    <property type="term" value="P:positive regulation of brown fat cell differentiation"/>
    <property type="evidence" value="ECO:0000250"/>
    <property type="project" value="UniProtKB"/>
</dbReference>
<dbReference type="GO" id="GO:1904263">
    <property type="term" value="P:positive regulation of TORC1 signaling"/>
    <property type="evidence" value="ECO:0000250"/>
    <property type="project" value="UniProtKB"/>
</dbReference>
<dbReference type="GO" id="GO:0006468">
    <property type="term" value="P:protein phosphorylation"/>
    <property type="evidence" value="ECO:0000250"/>
    <property type="project" value="UniProtKB"/>
</dbReference>
<dbReference type="GO" id="GO:0007346">
    <property type="term" value="P:regulation of mitotic cell cycle"/>
    <property type="evidence" value="ECO:0000318"/>
    <property type="project" value="GO_Central"/>
</dbReference>
<dbReference type="GO" id="GO:0022898">
    <property type="term" value="P:regulation of transmembrane transporter activity"/>
    <property type="evidence" value="ECO:0000250"/>
    <property type="project" value="UniProtKB"/>
</dbReference>
<dbReference type="CDD" id="cd14100">
    <property type="entry name" value="STKc_PIM1"/>
    <property type="match status" value="1"/>
</dbReference>
<dbReference type="FunFam" id="1.10.510.10:FF:000209">
    <property type="entry name" value="Serine/threonine-protein kinase pim-1"/>
    <property type="match status" value="1"/>
</dbReference>
<dbReference type="FunFam" id="3.30.200.20:FF:000232">
    <property type="entry name" value="Serine/threonine-protein kinase pim-1"/>
    <property type="match status" value="1"/>
</dbReference>
<dbReference type="Gene3D" id="3.30.200.20">
    <property type="entry name" value="Phosphorylase Kinase, domain 1"/>
    <property type="match status" value="1"/>
</dbReference>
<dbReference type="Gene3D" id="1.10.510.10">
    <property type="entry name" value="Transferase(Phosphotransferase) domain 1"/>
    <property type="match status" value="1"/>
</dbReference>
<dbReference type="InterPro" id="IPR011009">
    <property type="entry name" value="Kinase-like_dom_sf"/>
</dbReference>
<dbReference type="InterPro" id="IPR017348">
    <property type="entry name" value="PIM1/2/3"/>
</dbReference>
<dbReference type="InterPro" id="IPR051138">
    <property type="entry name" value="PIM_Ser/Thr_kinase"/>
</dbReference>
<dbReference type="InterPro" id="IPR000719">
    <property type="entry name" value="Prot_kinase_dom"/>
</dbReference>
<dbReference type="InterPro" id="IPR017441">
    <property type="entry name" value="Protein_kinase_ATP_BS"/>
</dbReference>
<dbReference type="InterPro" id="IPR008271">
    <property type="entry name" value="Ser/Thr_kinase_AS"/>
</dbReference>
<dbReference type="PANTHER" id="PTHR22984">
    <property type="entry name" value="SERINE/THREONINE-PROTEIN KINASE PIM"/>
    <property type="match status" value="1"/>
</dbReference>
<dbReference type="PANTHER" id="PTHR22984:SF29">
    <property type="entry name" value="SERINE_THREONINE-PROTEIN KINASE PIM-1"/>
    <property type="match status" value="1"/>
</dbReference>
<dbReference type="Pfam" id="PF00069">
    <property type="entry name" value="Pkinase"/>
    <property type="match status" value="1"/>
</dbReference>
<dbReference type="PIRSF" id="PIRSF037993">
    <property type="entry name" value="STPK_Pim-1"/>
    <property type="match status" value="1"/>
</dbReference>
<dbReference type="SMART" id="SM00220">
    <property type="entry name" value="S_TKc"/>
    <property type="match status" value="1"/>
</dbReference>
<dbReference type="SUPFAM" id="SSF56112">
    <property type="entry name" value="Protein kinase-like (PK-like)"/>
    <property type="match status" value="1"/>
</dbReference>
<dbReference type="PROSITE" id="PS00107">
    <property type="entry name" value="PROTEIN_KINASE_ATP"/>
    <property type="match status" value="1"/>
</dbReference>
<dbReference type="PROSITE" id="PS50011">
    <property type="entry name" value="PROTEIN_KINASE_DOM"/>
    <property type="match status" value="1"/>
</dbReference>
<dbReference type="PROSITE" id="PS00108">
    <property type="entry name" value="PROTEIN_KINASE_ST"/>
    <property type="match status" value="1"/>
</dbReference>
<protein>
    <recommendedName>
        <fullName>Serine/threonine-protein kinase pim-1</fullName>
        <ecNumber>2.7.11.1</ecNumber>
    </recommendedName>
</protein>
<sequence>MLLSKINSLAHLRTAPCNDLHATKLAPGKEKEPLESQYQVGPLLGSGGFGSVYSGIRVADNLPVAIKHVEKDRISDWGELPNGTRVPMEVVLLKKVSSGFSGVIRLLDWFERPDSFVLILERPEPVQDLFDFITERGALQEELARSFFWQVLEAVRHCHNCGVLHRDIKDENILIDLNRGELKLIDFGSGALLKDTVYTDFDGTRVYSPPEWIRYHRYHGRSAAVWSLGILLYDMVCGDIPFEHDEEIIRGQVFFRQRVSSECQHLIRWCLALRPSDRPSFEEIQNHPWMQDVLLPQETAEIHLHSLSPGPSK</sequence>
<gene>
    <name type="primary">PIM1</name>
</gene>
<organism>
    <name type="scientific">Felis catus</name>
    <name type="common">Cat</name>
    <name type="synonym">Felis silvestris catus</name>
    <dbReference type="NCBI Taxonomy" id="9685"/>
    <lineage>
        <taxon>Eukaryota</taxon>
        <taxon>Metazoa</taxon>
        <taxon>Chordata</taxon>
        <taxon>Craniata</taxon>
        <taxon>Vertebrata</taxon>
        <taxon>Euteleostomi</taxon>
        <taxon>Mammalia</taxon>
        <taxon>Eutheria</taxon>
        <taxon>Laurasiatheria</taxon>
        <taxon>Carnivora</taxon>
        <taxon>Feliformia</taxon>
        <taxon>Felidae</taxon>
        <taxon>Felinae</taxon>
        <taxon>Felis</taxon>
    </lineage>
</organism>
<comment type="function">
    <text evidence="2 3">Proto-oncogene with serine/threonine kinase activity involved in cell survival and cell proliferation and thus providing a selective advantage in tumorigenesis. Exerts its oncogenic activity through: the regulation of MYC transcriptional activity, the regulation of cell cycle progression and by phosphorylation and inhibition of proapoptotic proteins (BAD, MAP3K5). Phosphorylation of MYC leads to an increase of MYC protein stability and thereby an increase of transcriptional activity. The stabilization of MYC exerted by PIM1 might explain partly the strong synergism between these two oncogenes in tumorigenesis. Mediates survival signaling through phosphorylation of BAD, which induces release of the anti-apoptotic protein Bcl-X(L)/BCL2L1. Phosphorylation of MAP3K5, another proapoptotic protein, by PIM1, significantly decreases MAP3K5 kinase activity and inhibits MAP3K5-mediated phosphorylation of JNK and JNK/p38MAPK subsequently reducing caspase-3 activation and cell apoptosis. Stimulates cell cycle progression at the G1-S and G2-M transitions by phosphorylation of CDC25A and CDC25C. Phosphorylation of CDKN1A, a regulator of cell cycle progression at G1, results in the relocation of CDKN1A to the cytoplasm and enhanced CDKN1A protein stability. Promotes cell cycle progression and tumorigenesis by down-regulating expression of a regulator of cell cycle progression, CDKN1B, at both transcriptional and post-translational levels. Phosphorylation of CDKN1B, induces 14-3-3 protein binding, nuclear export and proteasome-dependent degradation. May affect the structure or silencing of chromatin by phosphorylating HP1 gamma/CBX3. Also acts as a regulator of homing and migration of bone marrow cells involving functional interaction with the CXCL12-CXCR4 signaling axis. Also phosphorylates and activates the ATP-binding cassette transporter ABCG2, allowing resistance to drugs through their excretion from cells. Promotes brown adipocyte differentiation.</text>
</comment>
<comment type="catalytic activity">
    <reaction>
        <text>L-seryl-[protein] + ATP = O-phospho-L-seryl-[protein] + ADP + H(+)</text>
        <dbReference type="Rhea" id="RHEA:17989"/>
        <dbReference type="Rhea" id="RHEA-COMP:9863"/>
        <dbReference type="Rhea" id="RHEA-COMP:11604"/>
        <dbReference type="ChEBI" id="CHEBI:15378"/>
        <dbReference type="ChEBI" id="CHEBI:29999"/>
        <dbReference type="ChEBI" id="CHEBI:30616"/>
        <dbReference type="ChEBI" id="CHEBI:83421"/>
        <dbReference type="ChEBI" id="CHEBI:456216"/>
        <dbReference type="EC" id="2.7.11.1"/>
    </reaction>
</comment>
<comment type="catalytic activity">
    <reaction>
        <text>L-threonyl-[protein] + ATP = O-phospho-L-threonyl-[protein] + ADP + H(+)</text>
        <dbReference type="Rhea" id="RHEA:46608"/>
        <dbReference type="Rhea" id="RHEA-COMP:11060"/>
        <dbReference type="Rhea" id="RHEA-COMP:11605"/>
        <dbReference type="ChEBI" id="CHEBI:15378"/>
        <dbReference type="ChEBI" id="CHEBI:30013"/>
        <dbReference type="ChEBI" id="CHEBI:30616"/>
        <dbReference type="ChEBI" id="CHEBI:61977"/>
        <dbReference type="ChEBI" id="CHEBI:456216"/>
        <dbReference type="EC" id="2.7.11.1"/>
    </reaction>
</comment>
<comment type="cofactor">
    <cofactor evidence="3">
        <name>Mg(2+)</name>
        <dbReference type="ChEBI" id="CHEBI:18420"/>
    </cofactor>
</comment>
<comment type="subunit">
    <text evidence="2 3">Interacts with RP9 (By similarity). Interacts with HSP90AA1, this interaction stabilizes PIM1 protein levels. Interacts (ubiquitinated form) with HSP70 and promotes its proteasomal degradation (By similarity).</text>
</comment>
<comment type="subcellular location">
    <subcellularLocation>
        <location evidence="1">Cytoplasm</location>
    </subcellularLocation>
    <subcellularLocation>
        <location evidence="1">Nucleus</location>
    </subcellularLocation>
</comment>
<comment type="PTM">
    <text evidence="1">Autophosphorylated (By similarity). Phosphorylated. Interaction with PPP2CA promotes dephosphorylation (By similarity).</text>
</comment>
<comment type="PTM">
    <text evidence="1">Ubiquitinated, leading to proteasomal degradation.</text>
</comment>
<comment type="similarity">
    <text evidence="6">Belongs to the protein kinase superfamily. CAMK Ser/Thr protein kinase family. PIM subfamily.</text>
</comment>
<evidence type="ECO:0000250" key="1"/>
<evidence type="ECO:0000250" key="2">
    <source>
        <dbReference type="UniProtKB" id="P06803"/>
    </source>
</evidence>
<evidence type="ECO:0000250" key="3">
    <source>
        <dbReference type="UniProtKB" id="P11309"/>
    </source>
</evidence>
<evidence type="ECO:0000255" key="4">
    <source>
        <dbReference type="PROSITE-ProRule" id="PRU00159"/>
    </source>
</evidence>
<evidence type="ECO:0000255" key="5">
    <source>
        <dbReference type="PROSITE-ProRule" id="PRU10027"/>
    </source>
</evidence>
<evidence type="ECO:0000305" key="6"/>
<proteinExistence type="evidence at transcript level"/>
<keyword id="KW-0053">Apoptosis</keyword>
<keyword id="KW-0067">ATP-binding</keyword>
<keyword id="KW-0131">Cell cycle</keyword>
<keyword id="KW-0963">Cytoplasm</keyword>
<keyword id="KW-0418">Kinase</keyword>
<keyword id="KW-0460">Magnesium</keyword>
<keyword id="KW-0547">Nucleotide-binding</keyword>
<keyword id="KW-0539">Nucleus</keyword>
<keyword id="KW-0597">Phosphoprotein</keyword>
<keyword id="KW-0656">Proto-oncogene</keyword>
<keyword id="KW-1185">Reference proteome</keyword>
<keyword id="KW-0723">Serine/threonine-protein kinase</keyword>
<keyword id="KW-0808">Transferase</keyword>
<keyword id="KW-0832">Ubl conjugation</keyword>